<accession>C3LUC2</accession>
<keyword id="KW-0436">Ligase</keyword>
<keyword id="KW-0597">Phosphoprotein</keyword>
<keyword id="KW-0662">Pyridine nucleotide biosynthesis</keyword>
<proteinExistence type="inferred from homology"/>
<reference key="1">
    <citation type="journal article" date="2008" name="PLoS ONE">
        <title>A recalibrated molecular clock and independent origins for the cholera pandemic clones.</title>
        <authorList>
            <person name="Feng L."/>
            <person name="Reeves P.R."/>
            <person name="Lan R."/>
            <person name="Ren Y."/>
            <person name="Gao C."/>
            <person name="Zhou Z."/>
            <person name="Ren Y."/>
            <person name="Cheng J."/>
            <person name="Wang W."/>
            <person name="Wang J."/>
            <person name="Qian W."/>
            <person name="Li D."/>
            <person name="Wang L."/>
        </authorList>
    </citation>
    <scope>NUCLEOTIDE SEQUENCE [LARGE SCALE GENOMIC DNA]</scope>
    <source>
        <strain>M66-2</strain>
    </source>
</reference>
<evidence type="ECO:0000255" key="1">
    <source>
        <dbReference type="HAMAP-Rule" id="MF_00570"/>
    </source>
</evidence>
<name>PNCB_VIBCM</name>
<sequence>MNPRLFSPHIIRSLLDLDAYKINMMQAIHHFYPDVSVRYELIVRSEEDASGLLDAIRQEIAHLGTLRFSDADIHYLTQHAPHLKATFLQSLRYFHFVPQEQVEMGIVKQGGKQQLRISIRGSWRDTILYETLVMAIVSEVRSRQRWAEVPADLPLKVLKTKLDQLKAEIERRGINNFSLTEMGTRRRFSSQVQRDVLACLKQEIPQWVLGTSNYHFAREFDLKPIGTIAHEWFMGHQALVNERDSQQVALERWLTAFDGMLAIAPTDTLTIDAFLNDFNRHLANAYDGVRHDSGCPFRWGDKMIAHYQQLGIDPTTKLFIFSDGLDFDQALELCEYFAGRVKISFGIGTFLTNDLANWRNAAGVEYRPLSIVIKLAECQGRPVAKISDQPEKAMCEDPIFLANLKRRFNIELDVDALIQELRHQKRSPRHYISAA</sequence>
<organism>
    <name type="scientific">Vibrio cholerae serotype O1 (strain M66-2)</name>
    <dbReference type="NCBI Taxonomy" id="579112"/>
    <lineage>
        <taxon>Bacteria</taxon>
        <taxon>Pseudomonadati</taxon>
        <taxon>Pseudomonadota</taxon>
        <taxon>Gammaproteobacteria</taxon>
        <taxon>Vibrionales</taxon>
        <taxon>Vibrionaceae</taxon>
        <taxon>Vibrio</taxon>
    </lineage>
</organism>
<feature type="chain" id="PRO_1000191533" description="Nicotinate phosphoribosyltransferase">
    <location>
        <begin position="1"/>
        <end position="435"/>
    </location>
</feature>
<feature type="modified residue" description="Phosphohistidine; by autocatalysis" evidence="1">
    <location>
        <position position="230"/>
    </location>
</feature>
<dbReference type="EC" id="6.3.4.21" evidence="1"/>
<dbReference type="EMBL" id="CP001234">
    <property type="protein sequence ID" value="ACP07077.1"/>
    <property type="molecule type" value="Genomic_DNA"/>
</dbReference>
<dbReference type="RefSeq" id="WP_001069589.1">
    <property type="nucleotide sequence ID" value="NC_012580.1"/>
</dbReference>
<dbReference type="SMR" id="C3LUC2"/>
<dbReference type="KEGG" id="vcm:VCM66_A0096"/>
<dbReference type="HOGENOM" id="CLU_030991_1_0_6"/>
<dbReference type="UniPathway" id="UPA00253">
    <property type="reaction ID" value="UER00457"/>
</dbReference>
<dbReference type="Proteomes" id="UP000001217">
    <property type="component" value="Chromosome II"/>
</dbReference>
<dbReference type="GO" id="GO:0005829">
    <property type="term" value="C:cytosol"/>
    <property type="evidence" value="ECO:0007669"/>
    <property type="project" value="TreeGrafter"/>
</dbReference>
<dbReference type="GO" id="GO:0004516">
    <property type="term" value="F:nicotinate phosphoribosyltransferase activity"/>
    <property type="evidence" value="ECO:0007669"/>
    <property type="project" value="UniProtKB-UniRule"/>
</dbReference>
<dbReference type="GO" id="GO:0034355">
    <property type="term" value="P:NAD biosynthetic process via the salvage pathway"/>
    <property type="evidence" value="ECO:0007669"/>
    <property type="project" value="TreeGrafter"/>
</dbReference>
<dbReference type="CDD" id="cd01401">
    <property type="entry name" value="PncB_like"/>
    <property type="match status" value="1"/>
</dbReference>
<dbReference type="Gene3D" id="3.20.140.10">
    <property type="entry name" value="nicotinate phosphoribosyltransferase"/>
    <property type="match status" value="1"/>
</dbReference>
<dbReference type="HAMAP" id="MF_00570">
    <property type="entry name" value="NAPRTase"/>
    <property type="match status" value="1"/>
</dbReference>
<dbReference type="InterPro" id="IPR041525">
    <property type="entry name" value="N/Namide_PRibTrfase"/>
</dbReference>
<dbReference type="InterPro" id="IPR040727">
    <property type="entry name" value="NAPRTase_N"/>
</dbReference>
<dbReference type="InterPro" id="IPR006406">
    <property type="entry name" value="Nic_PRibTrfase"/>
</dbReference>
<dbReference type="InterPro" id="IPR007229">
    <property type="entry name" value="Nic_PRibTrfase-Fam"/>
</dbReference>
<dbReference type="InterPro" id="IPR036068">
    <property type="entry name" value="Nicotinate_pribotase-like_C"/>
</dbReference>
<dbReference type="NCBIfam" id="TIGR01514">
    <property type="entry name" value="NAPRTase"/>
    <property type="match status" value="1"/>
</dbReference>
<dbReference type="NCBIfam" id="NF003704">
    <property type="entry name" value="PRK05321.1"/>
    <property type="match status" value="1"/>
</dbReference>
<dbReference type="PANTHER" id="PTHR11098">
    <property type="entry name" value="NICOTINATE PHOSPHORIBOSYLTRANSFERASE"/>
    <property type="match status" value="1"/>
</dbReference>
<dbReference type="PANTHER" id="PTHR11098:SF1">
    <property type="entry name" value="NICOTINATE PHOSPHORIBOSYLTRANSFERASE"/>
    <property type="match status" value="1"/>
</dbReference>
<dbReference type="Pfam" id="PF04095">
    <property type="entry name" value="NAPRTase"/>
    <property type="match status" value="1"/>
</dbReference>
<dbReference type="Pfam" id="PF17767">
    <property type="entry name" value="NAPRTase_N"/>
    <property type="match status" value="1"/>
</dbReference>
<dbReference type="PIRSF" id="PIRSF000484">
    <property type="entry name" value="NAPRT"/>
    <property type="match status" value="1"/>
</dbReference>
<dbReference type="SUPFAM" id="SSF51690">
    <property type="entry name" value="Nicotinate/Quinolinate PRTase C-terminal domain-like"/>
    <property type="match status" value="1"/>
</dbReference>
<dbReference type="SUPFAM" id="SSF54675">
    <property type="entry name" value="Nicotinate/Quinolinate PRTase N-terminal domain-like"/>
    <property type="match status" value="1"/>
</dbReference>
<protein>
    <recommendedName>
        <fullName evidence="1">Nicotinate phosphoribosyltransferase</fullName>
        <shortName evidence="1">NAPRTase</shortName>
        <ecNumber evidence="1">6.3.4.21</ecNumber>
    </recommendedName>
</protein>
<comment type="function">
    <text evidence="1">Catalyzes the synthesis of beta-nicotinate D-ribonucleotide from nicotinate and 5-phospho-D-ribose 1-phosphate at the expense of ATP.</text>
</comment>
<comment type="catalytic activity">
    <reaction evidence="1">
        <text>nicotinate + 5-phospho-alpha-D-ribose 1-diphosphate + ATP + H2O = nicotinate beta-D-ribonucleotide + ADP + phosphate + diphosphate</text>
        <dbReference type="Rhea" id="RHEA:36163"/>
        <dbReference type="ChEBI" id="CHEBI:15377"/>
        <dbReference type="ChEBI" id="CHEBI:30616"/>
        <dbReference type="ChEBI" id="CHEBI:32544"/>
        <dbReference type="ChEBI" id="CHEBI:33019"/>
        <dbReference type="ChEBI" id="CHEBI:43474"/>
        <dbReference type="ChEBI" id="CHEBI:57502"/>
        <dbReference type="ChEBI" id="CHEBI:58017"/>
        <dbReference type="ChEBI" id="CHEBI:456216"/>
        <dbReference type="EC" id="6.3.4.21"/>
    </reaction>
</comment>
<comment type="pathway">
    <text evidence="1">Cofactor biosynthesis; NAD(+) biosynthesis; nicotinate D-ribonucleotide from nicotinate: step 1/1.</text>
</comment>
<comment type="PTM">
    <text evidence="1">Transiently phosphorylated on a His residue during the reaction cycle. Phosphorylation strongly increases the affinity for substrates and increases the rate of nicotinate D-ribonucleotide production. Dephosphorylation regenerates the low-affinity form of the enzyme, leading to product release.</text>
</comment>
<comment type="similarity">
    <text evidence="1">Belongs to the NAPRTase family.</text>
</comment>
<gene>
    <name evidence="1" type="primary">pncB</name>
    <name type="ordered locus">VCM66_A0096</name>
</gene>